<reference key="1">
    <citation type="submission" date="2007-03" db="EMBL/GenBank/DDBJ databases">
        <title>Complete sequence of Shewanella loihica PV-4.</title>
        <authorList>
            <consortium name="US DOE Joint Genome Institute"/>
            <person name="Copeland A."/>
            <person name="Lucas S."/>
            <person name="Lapidus A."/>
            <person name="Barry K."/>
            <person name="Detter J.C."/>
            <person name="Glavina del Rio T."/>
            <person name="Hammon N."/>
            <person name="Israni S."/>
            <person name="Dalin E."/>
            <person name="Tice H."/>
            <person name="Pitluck S."/>
            <person name="Chain P."/>
            <person name="Malfatti S."/>
            <person name="Shin M."/>
            <person name="Vergez L."/>
            <person name="Schmutz J."/>
            <person name="Larimer F."/>
            <person name="Land M."/>
            <person name="Hauser L."/>
            <person name="Kyrpides N."/>
            <person name="Mikhailova N."/>
            <person name="Romine M.F."/>
            <person name="Serres G."/>
            <person name="Fredrickson J."/>
            <person name="Tiedje J."/>
            <person name="Richardson P."/>
        </authorList>
    </citation>
    <scope>NUCLEOTIDE SEQUENCE [LARGE SCALE GENOMIC DNA]</scope>
    <source>
        <strain>ATCC BAA-1088 / PV-4</strain>
    </source>
</reference>
<organism>
    <name type="scientific">Shewanella loihica (strain ATCC BAA-1088 / PV-4)</name>
    <dbReference type="NCBI Taxonomy" id="323850"/>
    <lineage>
        <taxon>Bacteria</taxon>
        <taxon>Pseudomonadati</taxon>
        <taxon>Pseudomonadota</taxon>
        <taxon>Gammaproteobacteria</taxon>
        <taxon>Alteromonadales</taxon>
        <taxon>Shewanellaceae</taxon>
        <taxon>Shewanella</taxon>
    </lineage>
</organism>
<name>PLSY_SHELP</name>
<feature type="chain" id="PRO_1000064223" description="Glycerol-3-phosphate acyltransferase">
    <location>
        <begin position="1"/>
        <end position="203"/>
    </location>
</feature>
<feature type="transmembrane region" description="Helical" evidence="1">
    <location>
        <begin position="6"/>
        <end position="26"/>
    </location>
</feature>
<feature type="transmembrane region" description="Helical" evidence="1">
    <location>
        <begin position="56"/>
        <end position="76"/>
    </location>
</feature>
<feature type="transmembrane region" description="Helical" evidence="1">
    <location>
        <begin position="82"/>
        <end position="102"/>
    </location>
</feature>
<feature type="transmembrane region" description="Helical" evidence="1">
    <location>
        <begin position="118"/>
        <end position="138"/>
    </location>
</feature>
<feature type="transmembrane region" description="Helical" evidence="1">
    <location>
        <begin position="141"/>
        <end position="161"/>
    </location>
</feature>
<gene>
    <name evidence="1" type="primary">plsY</name>
    <name type="ordered locus">Shew_1001</name>
</gene>
<accession>A3QBM4</accession>
<proteinExistence type="inferred from homology"/>
<comment type="function">
    <text evidence="1">Catalyzes the transfer of an acyl group from acyl-phosphate (acyl-PO(4)) to glycerol-3-phosphate (G3P) to form lysophosphatidic acid (LPA). This enzyme utilizes acyl-phosphate as fatty acyl donor, but not acyl-CoA or acyl-ACP.</text>
</comment>
<comment type="catalytic activity">
    <reaction evidence="1">
        <text>an acyl phosphate + sn-glycerol 3-phosphate = a 1-acyl-sn-glycero-3-phosphate + phosphate</text>
        <dbReference type="Rhea" id="RHEA:34075"/>
        <dbReference type="ChEBI" id="CHEBI:43474"/>
        <dbReference type="ChEBI" id="CHEBI:57597"/>
        <dbReference type="ChEBI" id="CHEBI:57970"/>
        <dbReference type="ChEBI" id="CHEBI:59918"/>
        <dbReference type="EC" id="2.3.1.275"/>
    </reaction>
</comment>
<comment type="pathway">
    <text evidence="1">Lipid metabolism; phospholipid metabolism.</text>
</comment>
<comment type="subunit">
    <text evidence="1">Probably interacts with PlsX.</text>
</comment>
<comment type="subcellular location">
    <subcellularLocation>
        <location evidence="1">Cell inner membrane</location>
        <topology evidence="1">Multi-pass membrane protein</topology>
    </subcellularLocation>
</comment>
<comment type="similarity">
    <text evidence="1">Belongs to the PlsY family.</text>
</comment>
<protein>
    <recommendedName>
        <fullName evidence="1">Glycerol-3-phosphate acyltransferase</fullName>
    </recommendedName>
    <alternativeName>
        <fullName evidence="1">Acyl-PO4 G3P acyltransferase</fullName>
    </alternativeName>
    <alternativeName>
        <fullName evidence="1">Acyl-phosphate--glycerol-3-phosphate acyltransferase</fullName>
    </alternativeName>
    <alternativeName>
        <fullName evidence="1">G3P acyltransferase</fullName>
        <shortName evidence="1">GPAT</shortName>
        <ecNumber evidence="1">2.3.1.275</ecNumber>
    </alternativeName>
    <alternativeName>
        <fullName evidence="1">Lysophosphatidic acid synthase</fullName>
        <shortName evidence="1">LPA synthase</shortName>
    </alternativeName>
</protein>
<sequence>MSLTLLTLAMILTAYLAGSISSAVLVCRLRGLPDPRSQGSGNPGATNVLRIGGASAAAMVLLFDMLKGAVPAYVAFRLGVDAVSLGVIAIAACLGHIFPIFFKFKGGKGVATAFGAMAPIGADLSLALIATWVIVVLICRYSSLAAIVTALLAPAYTWYFDERFTVPVAMLSLLIIIRHKENIHRLLKGEESKVSRKKRTDGN</sequence>
<evidence type="ECO:0000255" key="1">
    <source>
        <dbReference type="HAMAP-Rule" id="MF_01043"/>
    </source>
</evidence>
<dbReference type="EC" id="2.3.1.275" evidence="1"/>
<dbReference type="EMBL" id="CP000606">
    <property type="protein sequence ID" value="ABO22872.1"/>
    <property type="molecule type" value="Genomic_DNA"/>
</dbReference>
<dbReference type="RefSeq" id="WP_011864805.1">
    <property type="nucleotide sequence ID" value="NC_009092.1"/>
</dbReference>
<dbReference type="SMR" id="A3QBM4"/>
<dbReference type="STRING" id="323850.Shew_1001"/>
<dbReference type="KEGG" id="slo:Shew_1001"/>
<dbReference type="eggNOG" id="COG0344">
    <property type="taxonomic scope" value="Bacteria"/>
</dbReference>
<dbReference type="HOGENOM" id="CLU_081254_0_2_6"/>
<dbReference type="OrthoDB" id="9777124at2"/>
<dbReference type="UniPathway" id="UPA00085"/>
<dbReference type="Proteomes" id="UP000001558">
    <property type="component" value="Chromosome"/>
</dbReference>
<dbReference type="GO" id="GO:0005886">
    <property type="term" value="C:plasma membrane"/>
    <property type="evidence" value="ECO:0007669"/>
    <property type="project" value="UniProtKB-SubCell"/>
</dbReference>
<dbReference type="GO" id="GO:0043772">
    <property type="term" value="F:acyl-phosphate glycerol-3-phosphate acyltransferase activity"/>
    <property type="evidence" value="ECO:0007669"/>
    <property type="project" value="UniProtKB-UniRule"/>
</dbReference>
<dbReference type="GO" id="GO:0008654">
    <property type="term" value="P:phospholipid biosynthetic process"/>
    <property type="evidence" value="ECO:0007669"/>
    <property type="project" value="UniProtKB-UniRule"/>
</dbReference>
<dbReference type="HAMAP" id="MF_01043">
    <property type="entry name" value="PlsY"/>
    <property type="match status" value="1"/>
</dbReference>
<dbReference type="InterPro" id="IPR003811">
    <property type="entry name" value="G3P_acylTferase_PlsY"/>
</dbReference>
<dbReference type="NCBIfam" id="TIGR00023">
    <property type="entry name" value="glycerol-3-phosphate 1-O-acyltransferase PlsY"/>
    <property type="match status" value="1"/>
</dbReference>
<dbReference type="PANTHER" id="PTHR30309:SF0">
    <property type="entry name" value="GLYCEROL-3-PHOSPHATE ACYLTRANSFERASE-RELATED"/>
    <property type="match status" value="1"/>
</dbReference>
<dbReference type="PANTHER" id="PTHR30309">
    <property type="entry name" value="INNER MEMBRANE PROTEIN YGIH"/>
    <property type="match status" value="1"/>
</dbReference>
<dbReference type="Pfam" id="PF02660">
    <property type="entry name" value="G3P_acyltransf"/>
    <property type="match status" value="1"/>
</dbReference>
<dbReference type="SMART" id="SM01207">
    <property type="entry name" value="G3P_acyltransf"/>
    <property type="match status" value="1"/>
</dbReference>
<keyword id="KW-0997">Cell inner membrane</keyword>
<keyword id="KW-1003">Cell membrane</keyword>
<keyword id="KW-0444">Lipid biosynthesis</keyword>
<keyword id="KW-0443">Lipid metabolism</keyword>
<keyword id="KW-0472">Membrane</keyword>
<keyword id="KW-0594">Phospholipid biosynthesis</keyword>
<keyword id="KW-1208">Phospholipid metabolism</keyword>
<keyword id="KW-1185">Reference proteome</keyword>
<keyword id="KW-0808">Transferase</keyword>
<keyword id="KW-0812">Transmembrane</keyword>
<keyword id="KW-1133">Transmembrane helix</keyword>